<keyword id="KW-1185">Reference proteome</keyword>
<keyword id="KW-0687">Ribonucleoprotein</keyword>
<keyword id="KW-0689">Ribosomal protein</keyword>
<keyword id="KW-0694">RNA-binding</keyword>
<keyword id="KW-0699">rRNA-binding</keyword>
<keyword id="KW-0820">tRNA-binding</keyword>
<feature type="chain" id="PRO_0000243003" description="Large ribosomal subunit protein uL5">
    <location>
        <begin position="1"/>
        <end position="199"/>
    </location>
</feature>
<gene>
    <name evidence="1" type="primary">rplE</name>
    <name type="ordered locus">Francci3_0594</name>
</gene>
<proteinExistence type="inferred from homology"/>
<reference key="1">
    <citation type="journal article" date="2007" name="Genome Res.">
        <title>Genome characteristics of facultatively symbiotic Frankia sp. strains reflect host range and host plant biogeography.</title>
        <authorList>
            <person name="Normand P."/>
            <person name="Lapierre P."/>
            <person name="Tisa L.S."/>
            <person name="Gogarten J.P."/>
            <person name="Alloisio N."/>
            <person name="Bagnarol E."/>
            <person name="Bassi C.A."/>
            <person name="Berry A.M."/>
            <person name="Bickhart D.M."/>
            <person name="Choisne N."/>
            <person name="Couloux A."/>
            <person name="Cournoyer B."/>
            <person name="Cruveiller S."/>
            <person name="Daubin V."/>
            <person name="Demange N."/>
            <person name="Francino M.P."/>
            <person name="Goltsman E."/>
            <person name="Huang Y."/>
            <person name="Kopp O.R."/>
            <person name="Labarre L."/>
            <person name="Lapidus A."/>
            <person name="Lavire C."/>
            <person name="Marechal J."/>
            <person name="Martinez M."/>
            <person name="Mastronunzio J.E."/>
            <person name="Mullin B.C."/>
            <person name="Niemann J."/>
            <person name="Pujic P."/>
            <person name="Rawnsley T."/>
            <person name="Rouy Z."/>
            <person name="Schenowitz C."/>
            <person name="Sellstedt A."/>
            <person name="Tavares F."/>
            <person name="Tomkins J.P."/>
            <person name="Vallenet D."/>
            <person name="Valverde C."/>
            <person name="Wall L.G."/>
            <person name="Wang Y."/>
            <person name="Medigue C."/>
            <person name="Benson D.R."/>
        </authorList>
    </citation>
    <scope>NUCLEOTIDE SEQUENCE [LARGE SCALE GENOMIC DNA]</scope>
    <source>
        <strain>DSM 45818 / CECT 9043 / HFP020203 / CcI3</strain>
    </source>
</reference>
<comment type="function">
    <text evidence="1">This is one of the proteins that bind and probably mediate the attachment of the 5S RNA into the large ribosomal subunit, where it forms part of the central protuberance. In the 70S ribosome it contacts protein S13 of the 30S subunit (bridge B1b), connecting the 2 subunits; this bridge is implicated in subunit movement. Contacts the P site tRNA; the 5S rRNA and some of its associated proteins might help stabilize positioning of ribosome-bound tRNAs.</text>
</comment>
<comment type="subunit">
    <text evidence="1">Part of the 50S ribosomal subunit; part of the 5S rRNA/L5/L18/L25 subcomplex. Contacts the 5S rRNA and the P site tRNA. Forms a bridge to the 30S subunit in the 70S ribosome.</text>
</comment>
<comment type="similarity">
    <text evidence="1">Belongs to the universal ribosomal protein uL5 family.</text>
</comment>
<protein>
    <recommendedName>
        <fullName evidence="1">Large ribosomal subunit protein uL5</fullName>
    </recommendedName>
    <alternativeName>
        <fullName evidence="2">50S ribosomal protein L5</fullName>
    </alternativeName>
</protein>
<accession>Q2JFG4</accession>
<evidence type="ECO:0000255" key="1">
    <source>
        <dbReference type="HAMAP-Rule" id="MF_01333"/>
    </source>
</evidence>
<evidence type="ECO:0000305" key="2"/>
<name>RL5_FRACC</name>
<sequence length="199" mass="22267">MTVTTEGRTIEGRPIGARPVPRLKQRYRDEIAPALREQFSYRNVMQIPGVVKVVVNMGVGDAARDAKLIDGAVRDLAAITGQKPAVRRAKKSIAQFKLREGMPIGAKVTLRGDRMWEFLDRLVTIALPRIRDFRGLSPKQFDGAGNYTFGVTEQSIFHEIDIDRIDRVRGMDITVVTTATTDDEGRALLRALGFPFREN</sequence>
<dbReference type="EMBL" id="CP000249">
    <property type="protein sequence ID" value="ABD09978.1"/>
    <property type="molecule type" value="Genomic_DNA"/>
</dbReference>
<dbReference type="RefSeq" id="WP_011435049.1">
    <property type="nucleotide sequence ID" value="NZ_JENI01000019.1"/>
</dbReference>
<dbReference type="SMR" id="Q2JFG4"/>
<dbReference type="STRING" id="106370.Francci3_0594"/>
<dbReference type="KEGG" id="fra:Francci3_0594"/>
<dbReference type="eggNOG" id="COG0094">
    <property type="taxonomic scope" value="Bacteria"/>
</dbReference>
<dbReference type="HOGENOM" id="CLU_061015_2_1_11"/>
<dbReference type="OrthoDB" id="9806626at2"/>
<dbReference type="PhylomeDB" id="Q2JFG4"/>
<dbReference type="Proteomes" id="UP000001937">
    <property type="component" value="Chromosome"/>
</dbReference>
<dbReference type="GO" id="GO:1990904">
    <property type="term" value="C:ribonucleoprotein complex"/>
    <property type="evidence" value="ECO:0007669"/>
    <property type="project" value="UniProtKB-KW"/>
</dbReference>
<dbReference type="GO" id="GO:0005840">
    <property type="term" value="C:ribosome"/>
    <property type="evidence" value="ECO:0007669"/>
    <property type="project" value="UniProtKB-KW"/>
</dbReference>
<dbReference type="GO" id="GO:0019843">
    <property type="term" value="F:rRNA binding"/>
    <property type="evidence" value="ECO:0007669"/>
    <property type="project" value="UniProtKB-UniRule"/>
</dbReference>
<dbReference type="GO" id="GO:0003735">
    <property type="term" value="F:structural constituent of ribosome"/>
    <property type="evidence" value="ECO:0007669"/>
    <property type="project" value="InterPro"/>
</dbReference>
<dbReference type="GO" id="GO:0000049">
    <property type="term" value="F:tRNA binding"/>
    <property type="evidence" value="ECO:0007669"/>
    <property type="project" value="UniProtKB-UniRule"/>
</dbReference>
<dbReference type="GO" id="GO:0006412">
    <property type="term" value="P:translation"/>
    <property type="evidence" value="ECO:0007669"/>
    <property type="project" value="UniProtKB-UniRule"/>
</dbReference>
<dbReference type="FunFam" id="3.30.1440.10:FF:000001">
    <property type="entry name" value="50S ribosomal protein L5"/>
    <property type="match status" value="1"/>
</dbReference>
<dbReference type="Gene3D" id="3.30.1440.10">
    <property type="match status" value="1"/>
</dbReference>
<dbReference type="HAMAP" id="MF_01333_B">
    <property type="entry name" value="Ribosomal_uL5_B"/>
    <property type="match status" value="1"/>
</dbReference>
<dbReference type="InterPro" id="IPR002132">
    <property type="entry name" value="Ribosomal_uL5"/>
</dbReference>
<dbReference type="InterPro" id="IPR020930">
    <property type="entry name" value="Ribosomal_uL5_bac-type"/>
</dbReference>
<dbReference type="InterPro" id="IPR031309">
    <property type="entry name" value="Ribosomal_uL5_C"/>
</dbReference>
<dbReference type="InterPro" id="IPR022803">
    <property type="entry name" value="Ribosomal_uL5_dom_sf"/>
</dbReference>
<dbReference type="InterPro" id="IPR031310">
    <property type="entry name" value="Ribosomal_uL5_N"/>
</dbReference>
<dbReference type="NCBIfam" id="NF000585">
    <property type="entry name" value="PRK00010.1"/>
    <property type="match status" value="1"/>
</dbReference>
<dbReference type="PANTHER" id="PTHR11994">
    <property type="entry name" value="60S RIBOSOMAL PROTEIN L11-RELATED"/>
    <property type="match status" value="1"/>
</dbReference>
<dbReference type="Pfam" id="PF00281">
    <property type="entry name" value="Ribosomal_L5"/>
    <property type="match status" value="1"/>
</dbReference>
<dbReference type="Pfam" id="PF00673">
    <property type="entry name" value="Ribosomal_L5_C"/>
    <property type="match status" value="1"/>
</dbReference>
<dbReference type="PIRSF" id="PIRSF002161">
    <property type="entry name" value="Ribosomal_L5"/>
    <property type="match status" value="1"/>
</dbReference>
<dbReference type="SUPFAM" id="SSF55282">
    <property type="entry name" value="RL5-like"/>
    <property type="match status" value="1"/>
</dbReference>
<organism>
    <name type="scientific">Frankia casuarinae (strain DSM 45818 / CECT 9043 / HFP020203 / CcI3)</name>
    <dbReference type="NCBI Taxonomy" id="106370"/>
    <lineage>
        <taxon>Bacteria</taxon>
        <taxon>Bacillati</taxon>
        <taxon>Actinomycetota</taxon>
        <taxon>Actinomycetes</taxon>
        <taxon>Frankiales</taxon>
        <taxon>Frankiaceae</taxon>
        <taxon>Frankia</taxon>
    </lineage>
</organism>